<dbReference type="EC" id="4.2.1.11" evidence="1"/>
<dbReference type="EMBL" id="CP001217">
    <property type="protein sequence ID" value="ACJ07313.1"/>
    <property type="molecule type" value="Genomic_DNA"/>
</dbReference>
<dbReference type="SMR" id="B6JPQ2"/>
<dbReference type="KEGG" id="hpp:HPP12_0153"/>
<dbReference type="HOGENOM" id="CLU_031223_2_1_7"/>
<dbReference type="UniPathway" id="UPA00109">
    <property type="reaction ID" value="UER00187"/>
</dbReference>
<dbReference type="Proteomes" id="UP000008198">
    <property type="component" value="Chromosome"/>
</dbReference>
<dbReference type="GO" id="GO:0009986">
    <property type="term" value="C:cell surface"/>
    <property type="evidence" value="ECO:0007669"/>
    <property type="project" value="UniProtKB-SubCell"/>
</dbReference>
<dbReference type="GO" id="GO:0005576">
    <property type="term" value="C:extracellular region"/>
    <property type="evidence" value="ECO:0007669"/>
    <property type="project" value="UniProtKB-SubCell"/>
</dbReference>
<dbReference type="GO" id="GO:0000015">
    <property type="term" value="C:phosphopyruvate hydratase complex"/>
    <property type="evidence" value="ECO:0007669"/>
    <property type="project" value="InterPro"/>
</dbReference>
<dbReference type="GO" id="GO:0000287">
    <property type="term" value="F:magnesium ion binding"/>
    <property type="evidence" value="ECO:0007669"/>
    <property type="project" value="UniProtKB-UniRule"/>
</dbReference>
<dbReference type="GO" id="GO:0004634">
    <property type="term" value="F:phosphopyruvate hydratase activity"/>
    <property type="evidence" value="ECO:0007669"/>
    <property type="project" value="UniProtKB-UniRule"/>
</dbReference>
<dbReference type="GO" id="GO:0006096">
    <property type="term" value="P:glycolytic process"/>
    <property type="evidence" value="ECO:0007669"/>
    <property type="project" value="UniProtKB-UniRule"/>
</dbReference>
<dbReference type="CDD" id="cd03313">
    <property type="entry name" value="enolase"/>
    <property type="match status" value="1"/>
</dbReference>
<dbReference type="Gene3D" id="3.20.20.120">
    <property type="entry name" value="Enolase-like C-terminal domain"/>
    <property type="match status" value="1"/>
</dbReference>
<dbReference type="Gene3D" id="3.30.390.10">
    <property type="entry name" value="Enolase-like, N-terminal domain"/>
    <property type="match status" value="1"/>
</dbReference>
<dbReference type="HAMAP" id="MF_00318">
    <property type="entry name" value="Enolase"/>
    <property type="match status" value="1"/>
</dbReference>
<dbReference type="InterPro" id="IPR000941">
    <property type="entry name" value="Enolase"/>
</dbReference>
<dbReference type="InterPro" id="IPR036849">
    <property type="entry name" value="Enolase-like_C_sf"/>
</dbReference>
<dbReference type="InterPro" id="IPR029017">
    <property type="entry name" value="Enolase-like_N"/>
</dbReference>
<dbReference type="InterPro" id="IPR020810">
    <property type="entry name" value="Enolase_C"/>
</dbReference>
<dbReference type="InterPro" id="IPR020809">
    <property type="entry name" value="Enolase_CS"/>
</dbReference>
<dbReference type="InterPro" id="IPR020811">
    <property type="entry name" value="Enolase_N"/>
</dbReference>
<dbReference type="NCBIfam" id="TIGR01060">
    <property type="entry name" value="eno"/>
    <property type="match status" value="1"/>
</dbReference>
<dbReference type="PANTHER" id="PTHR11902">
    <property type="entry name" value="ENOLASE"/>
    <property type="match status" value="1"/>
</dbReference>
<dbReference type="PANTHER" id="PTHR11902:SF1">
    <property type="entry name" value="ENOLASE"/>
    <property type="match status" value="1"/>
</dbReference>
<dbReference type="Pfam" id="PF00113">
    <property type="entry name" value="Enolase_C"/>
    <property type="match status" value="1"/>
</dbReference>
<dbReference type="Pfam" id="PF03952">
    <property type="entry name" value="Enolase_N"/>
    <property type="match status" value="1"/>
</dbReference>
<dbReference type="PIRSF" id="PIRSF001400">
    <property type="entry name" value="Enolase"/>
    <property type="match status" value="1"/>
</dbReference>
<dbReference type="PRINTS" id="PR00148">
    <property type="entry name" value="ENOLASE"/>
</dbReference>
<dbReference type="SFLD" id="SFLDS00001">
    <property type="entry name" value="Enolase"/>
    <property type="match status" value="1"/>
</dbReference>
<dbReference type="SFLD" id="SFLDF00002">
    <property type="entry name" value="enolase"/>
    <property type="match status" value="1"/>
</dbReference>
<dbReference type="SMART" id="SM01192">
    <property type="entry name" value="Enolase_C"/>
    <property type="match status" value="1"/>
</dbReference>
<dbReference type="SMART" id="SM01193">
    <property type="entry name" value="Enolase_N"/>
    <property type="match status" value="1"/>
</dbReference>
<dbReference type="SUPFAM" id="SSF51604">
    <property type="entry name" value="Enolase C-terminal domain-like"/>
    <property type="match status" value="1"/>
</dbReference>
<dbReference type="SUPFAM" id="SSF54826">
    <property type="entry name" value="Enolase N-terminal domain-like"/>
    <property type="match status" value="1"/>
</dbReference>
<dbReference type="PROSITE" id="PS00164">
    <property type="entry name" value="ENOLASE"/>
    <property type="match status" value="1"/>
</dbReference>
<name>ENO_HELP2</name>
<protein>
    <recommendedName>
        <fullName evidence="1">Enolase</fullName>
        <ecNumber evidence="1">4.2.1.11</ecNumber>
    </recommendedName>
    <alternativeName>
        <fullName evidence="1">2-phospho-D-glycerate hydro-lyase</fullName>
    </alternativeName>
    <alternativeName>
        <fullName evidence="1">2-phosphoglycerate dehydratase</fullName>
    </alternativeName>
</protein>
<organism>
    <name type="scientific">Helicobacter pylori (strain P12)</name>
    <dbReference type="NCBI Taxonomy" id="570508"/>
    <lineage>
        <taxon>Bacteria</taxon>
        <taxon>Pseudomonadati</taxon>
        <taxon>Campylobacterota</taxon>
        <taxon>Epsilonproteobacteria</taxon>
        <taxon>Campylobacterales</taxon>
        <taxon>Helicobacteraceae</taxon>
        <taxon>Helicobacter</taxon>
    </lineage>
</organism>
<keyword id="KW-0963">Cytoplasm</keyword>
<keyword id="KW-0324">Glycolysis</keyword>
<keyword id="KW-0456">Lyase</keyword>
<keyword id="KW-0460">Magnesium</keyword>
<keyword id="KW-0479">Metal-binding</keyword>
<keyword id="KW-0964">Secreted</keyword>
<feature type="chain" id="PRO_1000115870" description="Enolase">
    <location>
        <begin position="1"/>
        <end position="426"/>
    </location>
</feature>
<feature type="active site" description="Proton donor" evidence="1">
    <location>
        <position position="205"/>
    </location>
</feature>
<feature type="active site" description="Proton acceptor" evidence="1">
    <location>
        <position position="338"/>
    </location>
</feature>
<feature type="binding site" evidence="1">
    <location>
        <position position="163"/>
    </location>
    <ligand>
        <name>(2R)-2-phosphoglycerate</name>
        <dbReference type="ChEBI" id="CHEBI:58289"/>
    </ligand>
</feature>
<feature type="binding site" evidence="1">
    <location>
        <position position="242"/>
    </location>
    <ligand>
        <name>Mg(2+)</name>
        <dbReference type="ChEBI" id="CHEBI:18420"/>
    </ligand>
</feature>
<feature type="binding site" evidence="1">
    <location>
        <position position="286"/>
    </location>
    <ligand>
        <name>Mg(2+)</name>
        <dbReference type="ChEBI" id="CHEBI:18420"/>
    </ligand>
</feature>
<feature type="binding site" evidence="1">
    <location>
        <position position="313"/>
    </location>
    <ligand>
        <name>Mg(2+)</name>
        <dbReference type="ChEBI" id="CHEBI:18420"/>
    </ligand>
</feature>
<feature type="binding site" evidence="1">
    <location>
        <position position="338"/>
    </location>
    <ligand>
        <name>(2R)-2-phosphoglycerate</name>
        <dbReference type="ChEBI" id="CHEBI:58289"/>
    </ligand>
</feature>
<feature type="binding site" evidence="1">
    <location>
        <position position="367"/>
    </location>
    <ligand>
        <name>(2R)-2-phosphoglycerate</name>
        <dbReference type="ChEBI" id="CHEBI:58289"/>
    </ligand>
</feature>
<feature type="binding site" evidence="1">
    <location>
        <position position="368"/>
    </location>
    <ligand>
        <name>(2R)-2-phosphoglycerate</name>
        <dbReference type="ChEBI" id="CHEBI:58289"/>
    </ligand>
</feature>
<feature type="binding site" evidence="1">
    <location>
        <position position="389"/>
    </location>
    <ligand>
        <name>(2R)-2-phosphoglycerate</name>
        <dbReference type="ChEBI" id="CHEBI:58289"/>
    </ligand>
</feature>
<proteinExistence type="inferred from homology"/>
<reference key="1">
    <citation type="submission" date="2008-10" db="EMBL/GenBank/DDBJ databases">
        <title>The complete genome sequence of Helicobacter pylori strain P12.</title>
        <authorList>
            <person name="Fischer W."/>
            <person name="Windhager L."/>
            <person name="Karnholz A."/>
            <person name="Zeiller M."/>
            <person name="Zimmer R."/>
            <person name="Haas R."/>
        </authorList>
    </citation>
    <scope>NUCLEOTIDE SEQUENCE [LARGE SCALE GENOMIC DNA]</scope>
    <source>
        <strain>P12</strain>
    </source>
</reference>
<comment type="function">
    <text evidence="1">Catalyzes the reversible conversion of 2-phosphoglycerate (2-PG) into phosphoenolpyruvate (PEP). It is essential for the degradation of carbohydrates via glycolysis.</text>
</comment>
<comment type="catalytic activity">
    <reaction evidence="1">
        <text>(2R)-2-phosphoglycerate = phosphoenolpyruvate + H2O</text>
        <dbReference type="Rhea" id="RHEA:10164"/>
        <dbReference type="ChEBI" id="CHEBI:15377"/>
        <dbReference type="ChEBI" id="CHEBI:58289"/>
        <dbReference type="ChEBI" id="CHEBI:58702"/>
        <dbReference type="EC" id="4.2.1.11"/>
    </reaction>
</comment>
<comment type="cofactor">
    <cofactor evidence="1">
        <name>Mg(2+)</name>
        <dbReference type="ChEBI" id="CHEBI:18420"/>
    </cofactor>
    <text evidence="1">Binds a second Mg(2+) ion via substrate during catalysis.</text>
</comment>
<comment type="pathway">
    <text evidence="1">Carbohydrate degradation; glycolysis; pyruvate from D-glyceraldehyde 3-phosphate: step 4/5.</text>
</comment>
<comment type="subcellular location">
    <subcellularLocation>
        <location evidence="1">Cytoplasm</location>
    </subcellularLocation>
    <subcellularLocation>
        <location evidence="1">Secreted</location>
    </subcellularLocation>
    <subcellularLocation>
        <location evidence="1">Cell surface</location>
    </subcellularLocation>
    <text evidence="1">Fractions of enolase are present in both the cytoplasm and on the cell surface.</text>
</comment>
<comment type="similarity">
    <text evidence="1">Belongs to the enolase family.</text>
</comment>
<accession>B6JPQ2</accession>
<evidence type="ECO:0000255" key="1">
    <source>
        <dbReference type="HAMAP-Rule" id="MF_00318"/>
    </source>
</evidence>
<gene>
    <name evidence="1" type="primary">eno</name>
    <name type="ordered locus">HPP12_0153</name>
</gene>
<sequence length="426" mass="46450">MLTIKDVHALEVMDSRGNPTIQASVILSDNTKASAIVPSGASTGKREALELRDNDKTRFLGKGVLRACENVNSVIKHHLIGLEATSQAFVDERLRALDGTPNYANLGANAVLGVSMALARASAKALNLPLYRYLGGANALTLPVPMLNIINGGTHANNSIDFQEYMIMPLGFESFREALRASAEVYHTLKKLLDGKNQLTSVGDEGGFAPNFNNNVEPLEAISQAIEKAGYKLGEEIALALDVASSELVDGNFNYHLKGENKILDSHELVAYYKELVAKYPIVSIEDGLSEDDWEGWAFLSKELGRQIQLVGDDLFVTNASILQKGIEKNVANAILIKPNQIGTISETLETIRLAKHHAYQCVMSHRSGESEDSFIADFAVALNTGEIKTGSTARSERIAKYNRLLEIEHELKGGIYIGKELFKHG</sequence>